<evidence type="ECO:0000250" key="1"/>
<evidence type="ECO:0000250" key="2">
    <source>
        <dbReference type="UniProtKB" id="O76070"/>
    </source>
</evidence>
<evidence type="ECO:0000250" key="3">
    <source>
        <dbReference type="UniProtKB" id="Q63544"/>
    </source>
</evidence>
<evidence type="ECO:0000256" key="4">
    <source>
        <dbReference type="SAM" id="MobiDB-lite"/>
    </source>
</evidence>
<evidence type="ECO:0000305" key="5"/>
<gene>
    <name type="primary">SNCG</name>
    <name type="ORF">QflA-20719</name>
</gene>
<protein>
    <recommendedName>
        <fullName>Gamma-synuclein</fullName>
    </recommendedName>
</protein>
<name>SYUG_MACFA</name>
<accession>Q2PFW6</accession>
<keyword id="KW-0963">Cytoplasm</keyword>
<keyword id="KW-0206">Cytoskeleton</keyword>
<keyword id="KW-0597">Phosphoprotein</keyword>
<keyword id="KW-1185">Reference proteome</keyword>
<keyword id="KW-0677">Repeat</keyword>
<dbReference type="EMBL" id="AB220471">
    <property type="protein sequence ID" value="BAE73004.1"/>
    <property type="molecule type" value="mRNA"/>
</dbReference>
<dbReference type="RefSeq" id="NP_001270799.1">
    <property type="nucleotide sequence ID" value="NM_001283870.1"/>
</dbReference>
<dbReference type="RefSeq" id="XP_015311380.1">
    <property type="nucleotide sequence ID" value="XM_015455894.1"/>
</dbReference>
<dbReference type="RefSeq" id="XP_045217910.1">
    <property type="nucleotide sequence ID" value="XM_045361975.2"/>
</dbReference>
<dbReference type="SMR" id="Q2PFW6"/>
<dbReference type="STRING" id="9541.ENSMFAP00000002454"/>
<dbReference type="GeneID" id="102121834"/>
<dbReference type="VEuPathDB" id="HostDB:ENSMFAG00000034096"/>
<dbReference type="eggNOG" id="ENOG502S3WF">
    <property type="taxonomic scope" value="Eukaryota"/>
</dbReference>
<dbReference type="OMA" id="TCERIEV"/>
<dbReference type="Proteomes" id="UP000233100">
    <property type="component" value="Chromosome 9"/>
</dbReference>
<dbReference type="GO" id="GO:0043679">
    <property type="term" value="C:axon terminus"/>
    <property type="evidence" value="ECO:0007669"/>
    <property type="project" value="TreeGrafter"/>
</dbReference>
<dbReference type="GO" id="GO:0005813">
    <property type="term" value="C:centrosome"/>
    <property type="evidence" value="ECO:0007669"/>
    <property type="project" value="UniProtKB-SubCell"/>
</dbReference>
<dbReference type="GO" id="GO:0043025">
    <property type="term" value="C:neuronal cell body"/>
    <property type="evidence" value="ECO:0007669"/>
    <property type="project" value="TreeGrafter"/>
</dbReference>
<dbReference type="GO" id="GO:0048471">
    <property type="term" value="C:perinuclear region of cytoplasm"/>
    <property type="evidence" value="ECO:0007669"/>
    <property type="project" value="UniProtKB-SubCell"/>
</dbReference>
<dbReference type="GO" id="GO:0005819">
    <property type="term" value="C:spindle"/>
    <property type="evidence" value="ECO:0007669"/>
    <property type="project" value="UniProtKB-SubCell"/>
</dbReference>
<dbReference type="GO" id="GO:1903136">
    <property type="term" value="F:cuprous ion binding"/>
    <property type="evidence" value="ECO:0007669"/>
    <property type="project" value="TreeGrafter"/>
</dbReference>
<dbReference type="GO" id="GO:0007268">
    <property type="term" value="P:chemical synaptic transmission"/>
    <property type="evidence" value="ECO:0007669"/>
    <property type="project" value="TreeGrafter"/>
</dbReference>
<dbReference type="GO" id="GO:0050808">
    <property type="term" value="P:synapse organization"/>
    <property type="evidence" value="ECO:0007669"/>
    <property type="project" value="TreeGrafter"/>
</dbReference>
<dbReference type="GO" id="GO:0048488">
    <property type="term" value="P:synaptic vesicle endocytosis"/>
    <property type="evidence" value="ECO:0007669"/>
    <property type="project" value="TreeGrafter"/>
</dbReference>
<dbReference type="FunFam" id="1.10.287.700:FF:000002">
    <property type="entry name" value="Gamma-synuclein"/>
    <property type="match status" value="1"/>
</dbReference>
<dbReference type="Gene3D" id="1.10.287.700">
    <property type="entry name" value="Helix hairpin bin"/>
    <property type="match status" value="1"/>
</dbReference>
<dbReference type="InterPro" id="IPR001058">
    <property type="entry name" value="Synuclein"/>
</dbReference>
<dbReference type="InterPro" id="IPR002462">
    <property type="entry name" value="Synuclein_gamma"/>
</dbReference>
<dbReference type="PANTHER" id="PTHR13820:SF10">
    <property type="entry name" value="GAMMA-SYNUCLEIN"/>
    <property type="match status" value="1"/>
</dbReference>
<dbReference type="PANTHER" id="PTHR13820">
    <property type="entry name" value="SYNUCLEIN"/>
    <property type="match status" value="1"/>
</dbReference>
<dbReference type="Pfam" id="PF01387">
    <property type="entry name" value="Synuclein"/>
    <property type="match status" value="1"/>
</dbReference>
<dbReference type="PRINTS" id="PR01214">
    <property type="entry name" value="GSYNUCLEIN"/>
</dbReference>
<dbReference type="PRINTS" id="PR01211">
    <property type="entry name" value="SYNUCLEIN"/>
</dbReference>
<dbReference type="SUPFAM" id="SSF118375">
    <property type="entry name" value="Synuclein"/>
    <property type="match status" value="1"/>
</dbReference>
<reference key="1">
    <citation type="submission" date="2005-07" db="EMBL/GenBank/DDBJ databases">
        <title>Analysis of gene expression in cynomolgus monkey tissues by macaque cDNA oligo-chips.</title>
        <authorList>
            <person name="Kobayashi M."/>
            <person name="Tanuma R."/>
            <person name="Hirata M."/>
            <person name="Osada N."/>
            <person name="Kusuda J."/>
            <person name="Sugano S."/>
            <person name="Hashimoto K."/>
        </authorList>
    </citation>
    <scope>NUCLEOTIDE SEQUENCE [LARGE SCALE MRNA]</scope>
    <source>
        <tissue>Frontal cortex</tissue>
    </source>
</reference>
<organism>
    <name type="scientific">Macaca fascicularis</name>
    <name type="common">Crab-eating macaque</name>
    <name type="synonym">Cynomolgus monkey</name>
    <dbReference type="NCBI Taxonomy" id="9541"/>
    <lineage>
        <taxon>Eukaryota</taxon>
        <taxon>Metazoa</taxon>
        <taxon>Chordata</taxon>
        <taxon>Craniata</taxon>
        <taxon>Vertebrata</taxon>
        <taxon>Euteleostomi</taxon>
        <taxon>Mammalia</taxon>
        <taxon>Eutheria</taxon>
        <taxon>Euarchontoglires</taxon>
        <taxon>Primates</taxon>
        <taxon>Haplorrhini</taxon>
        <taxon>Catarrhini</taxon>
        <taxon>Cercopithecidae</taxon>
        <taxon>Cercopithecinae</taxon>
        <taxon>Macaca</taxon>
    </lineage>
</organism>
<comment type="function">
    <text evidence="1">Plays a role in neurofilament network integrity. May be involved in modulating axonal architecture during development and in the adult. In vitro, increases the susceptibility of neurofilament-H to calcium-dependent proteases (By similarity). May also function in modulating the keratin network in skin. Activates the MAPK and Elk-1 signal transduction pathway (By similarity).</text>
</comment>
<comment type="subunit">
    <text evidence="1">May be a centrosome-associated protein. Interacts with MYOC; affects its secretion and its aggregation.</text>
</comment>
<comment type="subcellular location">
    <subcellularLocation>
        <location>Cytoplasm</location>
        <location>Perinuclear region</location>
    </subcellularLocation>
    <subcellularLocation>
        <location>Cytoplasm</location>
        <location>Cytoskeleton</location>
        <location>Microtubule organizing center</location>
        <location>Centrosome</location>
    </subcellularLocation>
    <subcellularLocation>
        <location>Cytoplasm</location>
        <location>Cytoskeleton</location>
        <location>Spindle</location>
    </subcellularLocation>
    <text evidence="1">Associated with centrosomes in several interphase cells. In mitotic cells, localized to the poles of the spindle (By similarity).</text>
</comment>
<comment type="PTM">
    <text evidence="1">Phosphorylated. Phosphorylation by GRK5 appears to occur on residues distinct from the residue phosphorylated by other kinases (By similarity).</text>
</comment>
<comment type="similarity">
    <text evidence="5">Belongs to the synuclein family.</text>
</comment>
<sequence>MDVFKKGFSIAKEGVVGAVEKTKQGVTEAAEKTKEGVMYVGTKTKENVVHSVTSVAEKTKEQANAVSEAVVSSVNTVAAKTVEEAENIAVTSGVVRKEDLKPSAPQQEGEAAKEKEEVAEEAQSGGD</sequence>
<proteinExistence type="evidence at transcript level"/>
<feature type="chain" id="PRO_0000252356" description="Gamma-synuclein">
    <location>
        <begin position="1"/>
        <end position="127"/>
    </location>
</feature>
<feature type="repeat" description="1">
    <location>
        <begin position="20"/>
        <end position="30"/>
    </location>
</feature>
<feature type="repeat" description="2">
    <location>
        <begin position="31"/>
        <end position="41"/>
    </location>
</feature>
<feature type="repeat" description="3; approximate">
    <location>
        <begin position="42"/>
        <end position="56"/>
    </location>
</feature>
<feature type="repeat" description="4">
    <location>
        <begin position="57"/>
        <end position="67"/>
    </location>
</feature>
<feature type="region of interest" description="4 X 11 AA tandem repeats of [EGSA]-K-T-K-[EQ]-[GQ]-V-X(4)">
    <location>
        <begin position="20"/>
        <end position="67"/>
    </location>
</feature>
<feature type="region of interest" description="Disordered" evidence="4">
    <location>
        <begin position="97"/>
        <end position="127"/>
    </location>
</feature>
<feature type="modified residue" description="Phosphoserine" evidence="3">
    <location>
        <position position="67"/>
    </location>
</feature>
<feature type="modified residue" description="Phosphoserine" evidence="3">
    <location>
        <position position="72"/>
    </location>
</feature>
<feature type="modified residue" description="Phosphoserine; by BARK1, CaMK2 and CK2" evidence="2">
    <location>
        <position position="124"/>
    </location>
</feature>